<dbReference type="EC" id="3.4.23.-" evidence="2"/>
<dbReference type="EMBL" id="CR382125">
    <property type="protein sequence ID" value="CAG99503.1"/>
    <property type="molecule type" value="Genomic_DNA"/>
</dbReference>
<dbReference type="RefSeq" id="XP_454416.1">
    <property type="nucleotide sequence ID" value="XM_454416.1"/>
</dbReference>
<dbReference type="SMR" id="Q6CNS3"/>
<dbReference type="FunCoup" id="Q6CNS3">
    <property type="interactions" value="292"/>
</dbReference>
<dbReference type="STRING" id="284590.Q6CNS3"/>
<dbReference type="MEROPS" id="A28.001"/>
<dbReference type="PaxDb" id="284590-Q6CNS3"/>
<dbReference type="KEGG" id="kla:KLLA0_E10341g"/>
<dbReference type="eggNOG" id="KOG0012">
    <property type="taxonomic scope" value="Eukaryota"/>
</dbReference>
<dbReference type="HOGENOM" id="CLU_020435_2_0_1"/>
<dbReference type="InParanoid" id="Q6CNS3"/>
<dbReference type="OMA" id="NTHTRHP"/>
<dbReference type="Proteomes" id="UP000000598">
    <property type="component" value="Chromosome E"/>
</dbReference>
<dbReference type="GO" id="GO:0005737">
    <property type="term" value="C:cytoplasm"/>
    <property type="evidence" value="ECO:0007669"/>
    <property type="project" value="UniProtKB-SubCell"/>
</dbReference>
<dbReference type="GO" id="GO:0004190">
    <property type="term" value="F:aspartic-type endopeptidase activity"/>
    <property type="evidence" value="ECO:0007669"/>
    <property type="project" value="UniProtKB-KW"/>
</dbReference>
<dbReference type="GO" id="GO:0015031">
    <property type="term" value="P:protein transport"/>
    <property type="evidence" value="ECO:0007669"/>
    <property type="project" value="UniProtKB-KW"/>
</dbReference>
<dbReference type="GO" id="GO:0006508">
    <property type="term" value="P:proteolysis"/>
    <property type="evidence" value="ECO:0007669"/>
    <property type="project" value="UniProtKB-KW"/>
</dbReference>
<dbReference type="CDD" id="cd05479">
    <property type="entry name" value="RP_DDI"/>
    <property type="match status" value="1"/>
</dbReference>
<dbReference type="CDD" id="cd14309">
    <property type="entry name" value="UBA_scDdi1_like"/>
    <property type="match status" value="1"/>
</dbReference>
<dbReference type="CDD" id="cd01796">
    <property type="entry name" value="Ubl_Ddi1_like"/>
    <property type="match status" value="1"/>
</dbReference>
<dbReference type="Gene3D" id="2.40.70.10">
    <property type="entry name" value="Acid Proteases"/>
    <property type="match status" value="1"/>
</dbReference>
<dbReference type="Gene3D" id="1.10.8.10">
    <property type="entry name" value="DNA helicase RuvA subunit, C-terminal domain"/>
    <property type="match status" value="1"/>
</dbReference>
<dbReference type="Gene3D" id="3.10.20.90">
    <property type="entry name" value="Phosphatidylinositol 3-kinase Catalytic Subunit, Chain A, domain 1"/>
    <property type="match status" value="1"/>
</dbReference>
<dbReference type="InterPro" id="IPR033882">
    <property type="entry name" value="DDI1_N"/>
</dbReference>
<dbReference type="InterPro" id="IPR019103">
    <property type="entry name" value="Peptidase_aspartic_DDI1-type"/>
</dbReference>
<dbReference type="InterPro" id="IPR021109">
    <property type="entry name" value="Peptidase_aspartic_dom_sf"/>
</dbReference>
<dbReference type="InterPro" id="IPR015940">
    <property type="entry name" value="UBA"/>
</dbReference>
<dbReference type="InterPro" id="IPR009060">
    <property type="entry name" value="UBA-like_sf"/>
</dbReference>
<dbReference type="PANTHER" id="PTHR15397:SF3">
    <property type="entry name" value="DNA DAMAGE INDUCIBLE 1 HOMOLOG 2"/>
    <property type="match status" value="1"/>
</dbReference>
<dbReference type="PANTHER" id="PTHR15397">
    <property type="entry name" value="SODIUM-GLUCOSE COTRANSPORTER REGULATORY PROTEIN -RELATED"/>
    <property type="match status" value="1"/>
</dbReference>
<dbReference type="Pfam" id="PF09668">
    <property type="entry name" value="Asp_protease"/>
    <property type="match status" value="1"/>
</dbReference>
<dbReference type="Pfam" id="PF00627">
    <property type="entry name" value="UBA"/>
    <property type="match status" value="1"/>
</dbReference>
<dbReference type="SMART" id="SM00165">
    <property type="entry name" value="UBA"/>
    <property type="match status" value="1"/>
</dbReference>
<dbReference type="SUPFAM" id="SSF50630">
    <property type="entry name" value="Acid proteases"/>
    <property type="match status" value="1"/>
</dbReference>
<dbReference type="SUPFAM" id="SSF46934">
    <property type="entry name" value="UBA-like"/>
    <property type="match status" value="1"/>
</dbReference>
<dbReference type="PROSITE" id="PS50030">
    <property type="entry name" value="UBA"/>
    <property type="match status" value="1"/>
</dbReference>
<feature type="chain" id="PRO_0000285315" description="DNA damage-inducible protein 1">
    <location>
        <begin position="1"/>
        <end position="414"/>
    </location>
</feature>
<feature type="domain" description="Ubiquitin-like">
    <location>
        <begin position="1"/>
        <end position="77"/>
    </location>
</feature>
<feature type="domain" description="UBA" evidence="4">
    <location>
        <begin position="375"/>
        <end position="414"/>
    </location>
</feature>
<feature type="region of interest" description="Disordered" evidence="5">
    <location>
        <begin position="342"/>
        <end position="372"/>
    </location>
</feature>
<feature type="active site" evidence="6">
    <location>
        <position position="217"/>
    </location>
</feature>
<accession>Q6CNS3</accession>
<protein>
    <recommendedName>
        <fullName>DNA damage-inducible protein 1</fullName>
        <ecNumber evidence="2">3.4.23.-</ecNumber>
    </recommendedName>
</protein>
<evidence type="ECO:0000250" key="1"/>
<evidence type="ECO:0000250" key="2">
    <source>
        <dbReference type="UniProtKB" id="I7HUG0"/>
    </source>
</evidence>
<evidence type="ECO:0000250" key="3">
    <source>
        <dbReference type="UniProtKB" id="P40087"/>
    </source>
</evidence>
<evidence type="ECO:0000255" key="4">
    <source>
        <dbReference type="PROSITE-ProRule" id="PRU00212"/>
    </source>
</evidence>
<evidence type="ECO:0000256" key="5">
    <source>
        <dbReference type="SAM" id="MobiDB-lite"/>
    </source>
</evidence>
<evidence type="ECO:0000305" key="6"/>
<comment type="function">
    <text evidence="2 3">Probable aspartic protease. May be involved in the regulation of exocytosis. Acts as a linker between the 19S proteasome and polyubiquitinated proteins via UBA domain interactions with ubiquitin for their subsequent degradation. Required for S-phase checkpoint control.</text>
</comment>
<comment type="subunit">
    <text evidence="1">Binds ubiquitin and polyubiquitinated proteins.</text>
</comment>
<comment type="subcellular location">
    <subcellularLocation>
        <location evidence="1">Cytoplasm</location>
    </subcellularLocation>
</comment>
<comment type="similarity">
    <text evidence="6">Belongs to the DDI1 family.</text>
</comment>
<keyword id="KW-0064">Aspartyl protease</keyword>
<keyword id="KW-0963">Cytoplasm</keyword>
<keyword id="KW-0378">Hydrolase</keyword>
<keyword id="KW-0645">Protease</keyword>
<keyword id="KW-0653">Protein transport</keyword>
<keyword id="KW-1185">Reference proteome</keyword>
<keyword id="KW-0813">Transport</keyword>
<reference key="1">
    <citation type="journal article" date="2004" name="Nature">
        <title>Genome evolution in yeasts.</title>
        <authorList>
            <person name="Dujon B."/>
            <person name="Sherman D."/>
            <person name="Fischer G."/>
            <person name="Durrens P."/>
            <person name="Casaregola S."/>
            <person name="Lafontaine I."/>
            <person name="de Montigny J."/>
            <person name="Marck C."/>
            <person name="Neuveglise C."/>
            <person name="Talla E."/>
            <person name="Goffard N."/>
            <person name="Frangeul L."/>
            <person name="Aigle M."/>
            <person name="Anthouard V."/>
            <person name="Babour A."/>
            <person name="Barbe V."/>
            <person name="Barnay S."/>
            <person name="Blanchin S."/>
            <person name="Beckerich J.-M."/>
            <person name="Beyne E."/>
            <person name="Bleykasten C."/>
            <person name="Boisrame A."/>
            <person name="Boyer J."/>
            <person name="Cattolico L."/>
            <person name="Confanioleri F."/>
            <person name="de Daruvar A."/>
            <person name="Despons L."/>
            <person name="Fabre E."/>
            <person name="Fairhead C."/>
            <person name="Ferry-Dumazet H."/>
            <person name="Groppi A."/>
            <person name="Hantraye F."/>
            <person name="Hennequin C."/>
            <person name="Jauniaux N."/>
            <person name="Joyet P."/>
            <person name="Kachouri R."/>
            <person name="Kerrest A."/>
            <person name="Koszul R."/>
            <person name="Lemaire M."/>
            <person name="Lesur I."/>
            <person name="Ma L."/>
            <person name="Muller H."/>
            <person name="Nicaud J.-M."/>
            <person name="Nikolski M."/>
            <person name="Oztas S."/>
            <person name="Ozier-Kalogeropoulos O."/>
            <person name="Pellenz S."/>
            <person name="Potier S."/>
            <person name="Richard G.-F."/>
            <person name="Straub M.-L."/>
            <person name="Suleau A."/>
            <person name="Swennen D."/>
            <person name="Tekaia F."/>
            <person name="Wesolowski-Louvel M."/>
            <person name="Westhof E."/>
            <person name="Wirth B."/>
            <person name="Zeniou-Meyer M."/>
            <person name="Zivanovic Y."/>
            <person name="Bolotin-Fukuhara M."/>
            <person name="Thierry A."/>
            <person name="Bouchier C."/>
            <person name="Caudron B."/>
            <person name="Scarpelli C."/>
            <person name="Gaillardin C."/>
            <person name="Weissenbach J."/>
            <person name="Wincker P."/>
            <person name="Souciet J.-L."/>
        </authorList>
    </citation>
    <scope>NUCLEOTIDE SEQUENCE [LARGE SCALE GENOMIC DNA]</scope>
    <source>
        <strain>ATCC 8585 / CBS 2359 / DSM 70799 / NBRC 1267 / NRRL Y-1140 / WM37</strain>
    </source>
</reference>
<proteinExistence type="inferred from homology"/>
<gene>
    <name type="primary">DDI1</name>
    <name type="ordered locus">KLLA0E10318g</name>
</gene>
<organism>
    <name type="scientific">Kluyveromyces lactis (strain ATCC 8585 / CBS 2359 / DSM 70799 / NBRC 1267 / NRRL Y-1140 / WM37)</name>
    <name type="common">Yeast</name>
    <name type="synonym">Candida sphaerica</name>
    <dbReference type="NCBI Taxonomy" id="284590"/>
    <lineage>
        <taxon>Eukaryota</taxon>
        <taxon>Fungi</taxon>
        <taxon>Dikarya</taxon>
        <taxon>Ascomycota</taxon>
        <taxon>Saccharomycotina</taxon>
        <taxon>Saccharomycetes</taxon>
        <taxon>Saccharomycetales</taxon>
        <taxon>Saccharomycetaceae</taxon>
        <taxon>Kluyveromyces</taxon>
    </lineage>
</organism>
<name>DDI1_KLULA</name>
<sequence length="414" mass="46262">MNITVTYEHSDDVLGPFELSEDMSLIDLFALIDFKEESQIIFHNMKQLDTKNTNITLKEAGLQNHDMLLIKPKNPASSQAAFGQPQEIDLTDEQYIEQFRTFLLENPSMAQEMGLPNLEHMINNKTQFHQLLGPVLLSRRGERSNNPFGIPNSEYSRLMSNPDDPVNQARISELTNQHEIDEQLRYAMEYTPESFTQVSMLYIKLEINGHPVKAFVDSGAQQTIMSTKLAERTGLTSLIDKRFSGIAQGVGTGKILGRIHTTQIKIHDVFLPCSFTVLDTPMEMLLGLDMLRRHQASIDLKNNVLRISDVETPFLPESEIPKDSLHALTTPAADEVRKAALKRDSSSGKNAMTGDANKVKQPKIPSSTTNQTVPSFAESDIKKLVDLGFSRKEAINALNKTGGNVDYAASLLFQ</sequence>